<gene>
    <name evidence="4" type="primary">dstyk</name>
    <name evidence="4" type="synonym">ripk5</name>
</gene>
<sequence length="922" mass="103531">MEGHGAQRSSPLARDLTRAFTSYNKHTVLLKKNLKETHAFFREMRQNYSNTCASSTLSSDSSSQETGQFSCISFPSHEEEFLRNTVGAAPYILVLGQDCAARYQLLNCLLGDRLLPLGPEAGQACHGGQGNVCKRRKLCFTHGRQTRLSLALPGQYELVHQLAANCGRWETVPREDLEILDECEDPAHRQAELEITLHHPLLQEAKVMVVPCPSVQPIEEALEDCTRSVIPIILYAVNRDSLSSEQVADLRKVKEILSFPVCYVRLPDASAASAELGQRCEKDKSKLQKQLLSRGLLGSLSGNCSCGAPAQTAAPGAKPQSVVGENFEKLHRILVPFTRQVLQNQQVEAASLLNGLHCRCLDLFINQAFDMQRDLQITPRRLEYTREKEGELFTSLMTIANRKQEEMKDMIVETLGSMKEQLLEDAANLEFTDIIVTTNGDPVTSKEIKSCIQQIQDLIVVRLNQAVANKLISSVDYLRESFVGTLERCLSSLEKSHIESSVHNITSNHLKQLLNAAYHVEVTFHSGSSVTRLFWEQIKQIIHRITFVNPPAITPEWKRKVAQDAIESLSAAKLARSICSQFRTRLYSSHEAFAASLRQLEERHTGRLERTEDLWLRVRKDHAPRLARLSLESRSLRDVVLHGKPKLGRELGRGQYGVVYLCDSWGGHNPCALKSVVPPDDKHWNDLALEFHYTRTLPKHERLVDLHGSVIDHTYAGGSSIAVLLIMERLHRDLYTGLKAGLSLQERLQIALDVVEGIRFLHSQGLLHRDIKLKNVLLDKQNRAKITDLGFCKPEAMMSGSIVGTPIHMAPELFTGKYDNSVDVYAFGILFWYLCAGSVKLPEAFEKCSSKDQLWNNVRKGARPERLPCFDEECWQLMEACWNGDPSQRPLLGIVEPSLESITVRMCNCGSEQKSSSLEDSC</sequence>
<name>DUSTY_TETNG</name>
<protein>
    <recommendedName>
        <fullName evidence="7">Dual serine/threonine and tyrosine protein kinase</fullName>
        <ecNumber evidence="1">2.7.12.1</ecNumber>
    </recommendedName>
    <alternativeName>
        <fullName evidence="7 8">Dusty protein kinase</fullName>
        <shortName evidence="7">Dusty PK</shortName>
    </alternativeName>
    <alternativeName>
        <fullName evidence="4">Receptor-interacting serine/threonine-protein kinase 5</fullName>
    </alternativeName>
</protein>
<accession>Q4VSN3</accession>
<evidence type="ECO:0000250" key="1">
    <source>
        <dbReference type="UniProtKB" id="P16879"/>
    </source>
</evidence>
<evidence type="ECO:0000250" key="2">
    <source>
        <dbReference type="UniProtKB" id="Q4VSN1"/>
    </source>
</evidence>
<evidence type="ECO:0000250" key="3">
    <source>
        <dbReference type="UniProtKB" id="Q6XUX1"/>
    </source>
</evidence>
<evidence type="ECO:0000250" key="4">
    <source>
        <dbReference type="UniProtKB" id="Q6XUX3"/>
    </source>
</evidence>
<evidence type="ECO:0000255" key="5">
    <source>
        <dbReference type="PROSITE-ProRule" id="PRU00159"/>
    </source>
</evidence>
<evidence type="ECO:0000255" key="6">
    <source>
        <dbReference type="PROSITE-ProRule" id="PRU10027"/>
    </source>
</evidence>
<evidence type="ECO:0000303" key="7">
    <source>
    </source>
</evidence>
<evidence type="ECO:0000312" key="8">
    <source>
        <dbReference type="EMBL" id="AAV40860.1"/>
    </source>
</evidence>
<comment type="function">
    <text evidence="2 4">May act as a positive regulator of ERK phosphorylation downstream of fibroblast growth factor-receptor activation. May induce both caspase-dependent apoptosis and caspase-independent cell death. May play a role in the embryonic development.</text>
</comment>
<comment type="catalytic activity">
    <reaction evidence="1">
        <text>L-seryl-[protein] + ATP = O-phospho-L-seryl-[protein] + ADP + H(+)</text>
        <dbReference type="Rhea" id="RHEA:17989"/>
        <dbReference type="Rhea" id="RHEA-COMP:9863"/>
        <dbReference type="Rhea" id="RHEA-COMP:11604"/>
        <dbReference type="ChEBI" id="CHEBI:15378"/>
        <dbReference type="ChEBI" id="CHEBI:29999"/>
        <dbReference type="ChEBI" id="CHEBI:30616"/>
        <dbReference type="ChEBI" id="CHEBI:83421"/>
        <dbReference type="ChEBI" id="CHEBI:456216"/>
        <dbReference type="EC" id="2.7.12.1"/>
    </reaction>
</comment>
<comment type="catalytic activity">
    <reaction evidence="1">
        <text>L-threonyl-[protein] + ATP = O-phospho-L-threonyl-[protein] + ADP + H(+)</text>
        <dbReference type="Rhea" id="RHEA:46608"/>
        <dbReference type="Rhea" id="RHEA-COMP:11060"/>
        <dbReference type="Rhea" id="RHEA-COMP:11605"/>
        <dbReference type="ChEBI" id="CHEBI:15378"/>
        <dbReference type="ChEBI" id="CHEBI:30013"/>
        <dbReference type="ChEBI" id="CHEBI:30616"/>
        <dbReference type="ChEBI" id="CHEBI:61977"/>
        <dbReference type="ChEBI" id="CHEBI:456216"/>
        <dbReference type="EC" id="2.7.12.1"/>
    </reaction>
</comment>
<comment type="catalytic activity">
    <reaction evidence="1">
        <text>L-tyrosyl-[protein] + ATP = O-phospho-L-tyrosyl-[protein] + ADP + H(+)</text>
        <dbReference type="Rhea" id="RHEA:10596"/>
        <dbReference type="Rhea" id="RHEA-COMP:10136"/>
        <dbReference type="Rhea" id="RHEA-COMP:20101"/>
        <dbReference type="ChEBI" id="CHEBI:15378"/>
        <dbReference type="ChEBI" id="CHEBI:30616"/>
        <dbReference type="ChEBI" id="CHEBI:46858"/>
        <dbReference type="ChEBI" id="CHEBI:61978"/>
        <dbReference type="ChEBI" id="CHEBI:456216"/>
        <dbReference type="EC" id="2.7.12.1"/>
    </reaction>
</comment>
<comment type="subcellular location">
    <subcellularLocation>
        <location evidence="3">Cytoplasm</location>
    </subcellularLocation>
    <subcellularLocation>
        <location evidence="3">Cell membrane</location>
    </subcellularLocation>
    <subcellularLocation>
        <location evidence="3">Apical cell membrane</location>
    </subcellularLocation>
    <subcellularLocation>
        <location evidence="3">Basolateral cell membrane</location>
    </subcellularLocation>
    <subcellularLocation>
        <location evidence="3">Cell junction</location>
    </subcellularLocation>
</comment>
<comment type="similarity">
    <text evidence="5">Belongs to the protein kinase superfamily. Ser/Thr protein kinase family.</text>
</comment>
<proteinExistence type="evidence at transcript level"/>
<organism>
    <name type="scientific">Tetraodon nigroviridis</name>
    <name type="common">Spotted green pufferfish</name>
    <name type="synonym">Chelonodon nigroviridis</name>
    <dbReference type="NCBI Taxonomy" id="99883"/>
    <lineage>
        <taxon>Eukaryota</taxon>
        <taxon>Metazoa</taxon>
        <taxon>Chordata</taxon>
        <taxon>Craniata</taxon>
        <taxon>Vertebrata</taxon>
        <taxon>Euteleostomi</taxon>
        <taxon>Actinopterygii</taxon>
        <taxon>Neopterygii</taxon>
        <taxon>Teleostei</taxon>
        <taxon>Neoteleostei</taxon>
        <taxon>Acanthomorphata</taxon>
        <taxon>Eupercaria</taxon>
        <taxon>Tetraodontiformes</taxon>
        <taxon>Tetradontoidea</taxon>
        <taxon>Tetraodontidae</taxon>
        <taxon>Tetraodon</taxon>
    </lineage>
</organism>
<feature type="chain" id="PRO_0000374058" description="Dual serine/threonine and tyrosine protein kinase">
    <location>
        <begin position="1"/>
        <end position="922"/>
    </location>
</feature>
<feature type="domain" description="Protein kinase" evidence="5">
    <location>
        <begin position="645"/>
        <end position="899"/>
    </location>
</feature>
<feature type="active site" description="Proton acceptor" evidence="4 5 6">
    <location>
        <position position="770"/>
    </location>
</feature>
<feature type="binding site" evidence="4 5">
    <location>
        <begin position="651"/>
        <end position="659"/>
    </location>
    <ligand>
        <name>ATP</name>
        <dbReference type="ChEBI" id="CHEBI:30616"/>
    </ligand>
</feature>
<feature type="binding site" evidence="4 5">
    <location>
        <position position="674"/>
    </location>
    <ligand>
        <name>ATP</name>
        <dbReference type="ChEBI" id="CHEBI:30616"/>
    </ligand>
</feature>
<reference evidence="8" key="1">
    <citation type="journal article" date="2006" name="Biochim. Biophys. Acta">
        <title>Dusty protein kinases: primary structure, gene evolution, tissue specific expression and unique features of the catalytic domain.</title>
        <authorList>
            <person name="Peng J."/>
            <person name="Dong W."/>
            <person name="Chen Y."/>
            <person name="Mo R."/>
            <person name="Cheng J.-F."/>
            <person name="Hui C.-C."/>
            <person name="Mohandas N."/>
            <person name="Huang C.-H."/>
        </authorList>
    </citation>
    <scope>NUCLEOTIDE SEQUENCE [MRNA]</scope>
</reference>
<keyword id="KW-0067">ATP-binding</keyword>
<keyword id="KW-0965">Cell junction</keyword>
<keyword id="KW-1003">Cell membrane</keyword>
<keyword id="KW-0963">Cytoplasm</keyword>
<keyword id="KW-0217">Developmental protein</keyword>
<keyword id="KW-0418">Kinase</keyword>
<keyword id="KW-0472">Membrane</keyword>
<keyword id="KW-0547">Nucleotide-binding</keyword>
<keyword id="KW-1185">Reference proteome</keyword>
<keyword id="KW-0723">Serine/threonine-protein kinase</keyword>
<keyword id="KW-0808">Transferase</keyword>
<keyword id="KW-0829">Tyrosine-protein kinase</keyword>
<dbReference type="EC" id="2.7.12.1" evidence="1"/>
<dbReference type="EMBL" id="AY641094">
    <property type="protein sequence ID" value="AAV40860.1"/>
    <property type="molecule type" value="mRNA"/>
</dbReference>
<dbReference type="SMR" id="Q4VSN3"/>
<dbReference type="FunCoup" id="Q4VSN3">
    <property type="interactions" value="1124"/>
</dbReference>
<dbReference type="STRING" id="99883.ENSTNIP00000004768"/>
<dbReference type="Ensembl" id="ENSTNIT00000002065.1">
    <property type="protein sequence ID" value="ENSTNIP00000000837.1"/>
    <property type="gene ID" value="ENSTNIG00000014651.1"/>
</dbReference>
<dbReference type="GeneTree" id="ENSGT00840000129948"/>
<dbReference type="InParanoid" id="Q4VSN3"/>
<dbReference type="Proteomes" id="UP000007303">
    <property type="component" value="Unassembled WGS sequence"/>
</dbReference>
<dbReference type="GO" id="GO:0070161">
    <property type="term" value="C:anchoring junction"/>
    <property type="evidence" value="ECO:0007669"/>
    <property type="project" value="UniProtKB-SubCell"/>
</dbReference>
<dbReference type="GO" id="GO:0016324">
    <property type="term" value="C:apical plasma membrane"/>
    <property type="evidence" value="ECO:0000250"/>
    <property type="project" value="UniProtKB"/>
</dbReference>
<dbReference type="GO" id="GO:0016323">
    <property type="term" value="C:basolateral plasma membrane"/>
    <property type="evidence" value="ECO:0000250"/>
    <property type="project" value="UniProtKB"/>
</dbReference>
<dbReference type="GO" id="GO:0005737">
    <property type="term" value="C:cytoplasm"/>
    <property type="evidence" value="ECO:0000250"/>
    <property type="project" value="UniProtKB"/>
</dbReference>
<dbReference type="GO" id="GO:0005524">
    <property type="term" value="F:ATP binding"/>
    <property type="evidence" value="ECO:0007669"/>
    <property type="project" value="UniProtKB-KW"/>
</dbReference>
<dbReference type="GO" id="GO:0106310">
    <property type="term" value="F:protein serine kinase activity"/>
    <property type="evidence" value="ECO:0007669"/>
    <property type="project" value="RHEA"/>
</dbReference>
<dbReference type="GO" id="GO:0004674">
    <property type="term" value="F:protein serine/threonine kinase activity"/>
    <property type="evidence" value="ECO:0007669"/>
    <property type="project" value="UniProtKB-KW"/>
</dbReference>
<dbReference type="GO" id="GO:0004712">
    <property type="term" value="F:protein serine/threonine/tyrosine kinase activity"/>
    <property type="evidence" value="ECO:0007669"/>
    <property type="project" value="UniProtKB-EC"/>
</dbReference>
<dbReference type="GO" id="GO:0004713">
    <property type="term" value="F:protein tyrosine kinase activity"/>
    <property type="evidence" value="ECO:0007669"/>
    <property type="project" value="UniProtKB-KW"/>
</dbReference>
<dbReference type="GO" id="GO:0044344">
    <property type="term" value="P:cellular response to fibroblast growth factor stimulus"/>
    <property type="evidence" value="ECO:0007669"/>
    <property type="project" value="TreeGrafter"/>
</dbReference>
<dbReference type="GO" id="GO:0048568">
    <property type="term" value="P:embryonic organ development"/>
    <property type="evidence" value="ECO:0000250"/>
    <property type="project" value="UniProtKB"/>
</dbReference>
<dbReference type="GO" id="GO:0043066">
    <property type="term" value="P:negative regulation of apoptotic process"/>
    <property type="evidence" value="ECO:0007669"/>
    <property type="project" value="TreeGrafter"/>
</dbReference>
<dbReference type="GO" id="GO:0070374">
    <property type="term" value="P:positive regulation of ERK1 and ERK2 cascade"/>
    <property type="evidence" value="ECO:0007669"/>
    <property type="project" value="TreeGrafter"/>
</dbReference>
<dbReference type="GO" id="GO:0045743">
    <property type="term" value="P:positive regulation of fibroblast growth factor receptor signaling pathway"/>
    <property type="evidence" value="ECO:0007669"/>
    <property type="project" value="TreeGrafter"/>
</dbReference>
<dbReference type="CDD" id="cd13975">
    <property type="entry name" value="PKc_Dusty"/>
    <property type="match status" value="1"/>
</dbReference>
<dbReference type="FunFam" id="1.10.510.10:FF:000244">
    <property type="entry name" value="Dual serine/threonine and tyrosine protein kinase"/>
    <property type="match status" value="1"/>
</dbReference>
<dbReference type="Gene3D" id="1.10.510.10">
    <property type="entry name" value="Transferase(Phosphotransferase) domain 1"/>
    <property type="match status" value="1"/>
</dbReference>
<dbReference type="InterPro" id="IPR051302">
    <property type="entry name" value="Dual_SerThr-Tyr_Kinase"/>
</dbReference>
<dbReference type="InterPro" id="IPR011009">
    <property type="entry name" value="Kinase-like_dom_sf"/>
</dbReference>
<dbReference type="InterPro" id="IPR000719">
    <property type="entry name" value="Prot_kinase_dom"/>
</dbReference>
<dbReference type="InterPro" id="IPR017441">
    <property type="entry name" value="Protein_kinase_ATP_BS"/>
</dbReference>
<dbReference type="InterPro" id="IPR008271">
    <property type="entry name" value="Ser/Thr_kinase_AS"/>
</dbReference>
<dbReference type="PANTHER" id="PTHR46392">
    <property type="entry name" value="DUAL SERINE/THREONINE AND TYROSINE PROTEIN KINASE"/>
    <property type="match status" value="1"/>
</dbReference>
<dbReference type="PANTHER" id="PTHR46392:SF1">
    <property type="entry name" value="DUAL SERINE_THREONINE AND TYROSINE PROTEIN KINASE"/>
    <property type="match status" value="1"/>
</dbReference>
<dbReference type="Pfam" id="PF00069">
    <property type="entry name" value="Pkinase"/>
    <property type="match status" value="1"/>
</dbReference>
<dbReference type="PIRSF" id="PIRSF000615">
    <property type="entry name" value="TyrPK_CSF1-R"/>
    <property type="match status" value="1"/>
</dbReference>
<dbReference type="SMART" id="SM00220">
    <property type="entry name" value="S_TKc"/>
    <property type="match status" value="1"/>
</dbReference>
<dbReference type="SUPFAM" id="SSF56112">
    <property type="entry name" value="Protein kinase-like (PK-like)"/>
    <property type="match status" value="1"/>
</dbReference>
<dbReference type="PROSITE" id="PS00107">
    <property type="entry name" value="PROTEIN_KINASE_ATP"/>
    <property type="match status" value="1"/>
</dbReference>
<dbReference type="PROSITE" id="PS50011">
    <property type="entry name" value="PROTEIN_KINASE_DOM"/>
    <property type="match status" value="1"/>
</dbReference>
<dbReference type="PROSITE" id="PS00108">
    <property type="entry name" value="PROTEIN_KINASE_ST"/>
    <property type="match status" value="1"/>
</dbReference>